<comment type="function">
    <text evidence="1">Key enzyme in the regulation of glycerol uptake and metabolism. Catalyzes the phosphorylation of glycerol to yield sn-glycerol 3-phosphate.</text>
</comment>
<comment type="catalytic activity">
    <reaction evidence="1">
        <text>glycerol + ATP = sn-glycerol 3-phosphate + ADP + H(+)</text>
        <dbReference type="Rhea" id="RHEA:21644"/>
        <dbReference type="ChEBI" id="CHEBI:15378"/>
        <dbReference type="ChEBI" id="CHEBI:17754"/>
        <dbReference type="ChEBI" id="CHEBI:30616"/>
        <dbReference type="ChEBI" id="CHEBI:57597"/>
        <dbReference type="ChEBI" id="CHEBI:456216"/>
        <dbReference type="EC" id="2.7.1.30"/>
    </reaction>
</comment>
<comment type="pathway">
    <text evidence="1">Polyol metabolism; glycerol degradation via glycerol kinase pathway; sn-glycerol 3-phosphate from glycerol: step 1/1.</text>
</comment>
<comment type="similarity">
    <text evidence="1">Belongs to the FGGY kinase family.</text>
</comment>
<keyword id="KW-0067">ATP-binding</keyword>
<keyword id="KW-0319">Glycerol metabolism</keyword>
<keyword id="KW-0418">Kinase</keyword>
<keyword id="KW-0547">Nucleotide-binding</keyword>
<keyword id="KW-1185">Reference proteome</keyword>
<keyword id="KW-0808">Transferase</keyword>
<organism>
    <name type="scientific">Haloquadratum walsbyi (strain DSM 16790 / HBSQ001)</name>
    <dbReference type="NCBI Taxonomy" id="362976"/>
    <lineage>
        <taxon>Archaea</taxon>
        <taxon>Methanobacteriati</taxon>
        <taxon>Methanobacteriota</taxon>
        <taxon>Stenosarchaea group</taxon>
        <taxon>Halobacteria</taxon>
        <taxon>Halobacteriales</taxon>
        <taxon>Haloferacaceae</taxon>
        <taxon>Haloquadratum</taxon>
    </lineage>
</organism>
<reference key="1">
    <citation type="journal article" date="2006" name="BMC Genomics">
        <title>The genome of the square archaeon Haloquadratum walsbyi: life at the limits of water activity.</title>
        <authorList>
            <person name="Bolhuis H."/>
            <person name="Palm P."/>
            <person name="Wende A."/>
            <person name="Falb M."/>
            <person name="Rampp M."/>
            <person name="Rodriguez-Valera F."/>
            <person name="Pfeiffer F."/>
            <person name="Oesterhelt D."/>
        </authorList>
    </citation>
    <scope>NUCLEOTIDE SEQUENCE [LARGE SCALE GENOMIC DNA]</scope>
    <source>
        <strain>DSM 16790 / HBSQ001</strain>
    </source>
</reference>
<name>GLPK_HALWD</name>
<dbReference type="EC" id="2.7.1.30" evidence="1"/>
<dbReference type="EMBL" id="AM180088">
    <property type="protein sequence ID" value="CAJ51861.1"/>
    <property type="molecule type" value="Genomic_DNA"/>
</dbReference>
<dbReference type="RefSeq" id="WP_011571009.1">
    <property type="nucleotide sequence ID" value="NC_008212.1"/>
</dbReference>
<dbReference type="SMR" id="Q18JE8"/>
<dbReference type="STRING" id="362976.HQ_1733A"/>
<dbReference type="GeneID" id="4194045"/>
<dbReference type="KEGG" id="hwa:HQ_1733A"/>
<dbReference type="eggNOG" id="arCOG00024">
    <property type="taxonomic scope" value="Archaea"/>
</dbReference>
<dbReference type="HOGENOM" id="CLU_009281_2_3_2"/>
<dbReference type="UniPathway" id="UPA00618">
    <property type="reaction ID" value="UER00672"/>
</dbReference>
<dbReference type="Proteomes" id="UP000001975">
    <property type="component" value="Chromosome"/>
</dbReference>
<dbReference type="GO" id="GO:0005829">
    <property type="term" value="C:cytosol"/>
    <property type="evidence" value="ECO:0007669"/>
    <property type="project" value="TreeGrafter"/>
</dbReference>
<dbReference type="GO" id="GO:0005524">
    <property type="term" value="F:ATP binding"/>
    <property type="evidence" value="ECO:0007669"/>
    <property type="project" value="UniProtKB-UniRule"/>
</dbReference>
<dbReference type="GO" id="GO:0004370">
    <property type="term" value="F:glycerol kinase activity"/>
    <property type="evidence" value="ECO:0000250"/>
    <property type="project" value="UniProtKB"/>
</dbReference>
<dbReference type="GO" id="GO:0019563">
    <property type="term" value="P:glycerol catabolic process"/>
    <property type="evidence" value="ECO:0007669"/>
    <property type="project" value="UniProtKB-UniRule"/>
</dbReference>
<dbReference type="GO" id="GO:0006071">
    <property type="term" value="P:glycerol metabolic process"/>
    <property type="evidence" value="ECO:0000250"/>
    <property type="project" value="UniProtKB"/>
</dbReference>
<dbReference type="GO" id="GO:0006072">
    <property type="term" value="P:glycerol-3-phosphate metabolic process"/>
    <property type="evidence" value="ECO:0007669"/>
    <property type="project" value="InterPro"/>
</dbReference>
<dbReference type="CDD" id="cd07769">
    <property type="entry name" value="ASKHA_NBD_FGGY_GK"/>
    <property type="match status" value="1"/>
</dbReference>
<dbReference type="FunFam" id="3.30.420.40:FF:000007">
    <property type="entry name" value="Glycerol kinase"/>
    <property type="match status" value="1"/>
</dbReference>
<dbReference type="FunFam" id="3.30.420.40:FF:000008">
    <property type="entry name" value="Glycerol kinase"/>
    <property type="match status" value="1"/>
</dbReference>
<dbReference type="Gene3D" id="3.30.420.40">
    <property type="match status" value="2"/>
</dbReference>
<dbReference type="HAMAP" id="MF_00186">
    <property type="entry name" value="Glycerol_kin"/>
    <property type="match status" value="1"/>
</dbReference>
<dbReference type="InterPro" id="IPR043129">
    <property type="entry name" value="ATPase_NBD"/>
</dbReference>
<dbReference type="InterPro" id="IPR000577">
    <property type="entry name" value="Carb_kinase_FGGY"/>
</dbReference>
<dbReference type="InterPro" id="IPR018483">
    <property type="entry name" value="Carb_kinase_FGGY_CS"/>
</dbReference>
<dbReference type="InterPro" id="IPR018485">
    <property type="entry name" value="FGGY_C"/>
</dbReference>
<dbReference type="InterPro" id="IPR018484">
    <property type="entry name" value="FGGY_N"/>
</dbReference>
<dbReference type="InterPro" id="IPR005999">
    <property type="entry name" value="Glycerol_kin"/>
</dbReference>
<dbReference type="NCBIfam" id="TIGR01311">
    <property type="entry name" value="glycerol_kin"/>
    <property type="match status" value="1"/>
</dbReference>
<dbReference type="NCBIfam" id="NF000756">
    <property type="entry name" value="PRK00047.1"/>
    <property type="match status" value="1"/>
</dbReference>
<dbReference type="PANTHER" id="PTHR10196:SF69">
    <property type="entry name" value="GLYCEROL KINASE"/>
    <property type="match status" value="1"/>
</dbReference>
<dbReference type="PANTHER" id="PTHR10196">
    <property type="entry name" value="SUGAR KINASE"/>
    <property type="match status" value="1"/>
</dbReference>
<dbReference type="Pfam" id="PF02782">
    <property type="entry name" value="FGGY_C"/>
    <property type="match status" value="1"/>
</dbReference>
<dbReference type="Pfam" id="PF00370">
    <property type="entry name" value="FGGY_N"/>
    <property type="match status" value="1"/>
</dbReference>
<dbReference type="PIRSF" id="PIRSF000538">
    <property type="entry name" value="GlpK"/>
    <property type="match status" value="1"/>
</dbReference>
<dbReference type="SUPFAM" id="SSF53067">
    <property type="entry name" value="Actin-like ATPase domain"/>
    <property type="match status" value="2"/>
</dbReference>
<dbReference type="PROSITE" id="PS00445">
    <property type="entry name" value="FGGY_KINASES_2"/>
    <property type="match status" value="1"/>
</dbReference>
<proteinExistence type="inferred from homology"/>
<evidence type="ECO:0000255" key="1">
    <source>
        <dbReference type="HAMAP-Rule" id="MF_00186"/>
    </source>
</evidence>
<gene>
    <name evidence="1" type="primary">glpK</name>
    <name type="ordered locus">HQ_1733A</name>
</gene>
<sequence length="510" mass="56321">MADTYVGSIDQGTTGTRFMVFDHSGQVVANAYEKHEQIYPNPGWVEHDPIEIWENTKEVVTRGLEEAGLDAEQLEALGVTNQRETTIVWDEASGKPVHNALVWQDRRTTDRVEEIQEAGKVEMIREKTGLECDAYFSATKTEWILDNAEPLKMQASRGGDVRDRAEDGELLMGTIDSWLIQNLTGNHITDVTNASRTMLYNIRELEWDDELLEEFRVPRSMVPEVRPSSDDEYYGHTDADGFLGAEIPVAGALGDQQAAMFGQTCFDEGDAKNTYGTGSFYLMNTGTDAVASDHGLLTTIGFQMSGEPVQYALEGSIFVTGAAIEFLEDVDLINNAAQTAELASSVDSTDGVYMVPAFTGLGAPHWDGRARGTLVGMTRGTEKEHIVRATLESIGYQTRDVAEAMEADSGIETTSLRVDGGAVKNNFLCQLQSDILQTDIVRPVVDETTALGSAYAAGLAVGYWDTVDELRDNWQVDREFESEMDSADANTMYDRWDDAVERSLDWAQEE</sequence>
<feature type="chain" id="PRO_1000020737" description="Glycerol kinase">
    <location>
        <begin position="1"/>
        <end position="510"/>
    </location>
</feature>
<feature type="binding site" evidence="1">
    <location>
        <position position="13"/>
    </location>
    <ligand>
        <name>ADP</name>
        <dbReference type="ChEBI" id="CHEBI:456216"/>
    </ligand>
</feature>
<feature type="binding site" evidence="1">
    <location>
        <position position="13"/>
    </location>
    <ligand>
        <name>ATP</name>
        <dbReference type="ChEBI" id="CHEBI:30616"/>
    </ligand>
</feature>
<feature type="binding site" evidence="1">
    <location>
        <position position="13"/>
    </location>
    <ligand>
        <name>sn-glycerol 3-phosphate</name>
        <dbReference type="ChEBI" id="CHEBI:57597"/>
    </ligand>
</feature>
<feature type="binding site" evidence="1">
    <location>
        <position position="14"/>
    </location>
    <ligand>
        <name>ATP</name>
        <dbReference type="ChEBI" id="CHEBI:30616"/>
    </ligand>
</feature>
<feature type="binding site" evidence="1">
    <location>
        <position position="17"/>
    </location>
    <ligand>
        <name>ADP</name>
        <dbReference type="ChEBI" id="CHEBI:456216"/>
    </ligand>
</feature>
<feature type="binding site" evidence="1">
    <location>
        <position position="83"/>
    </location>
    <ligand>
        <name>glycerol</name>
        <dbReference type="ChEBI" id="CHEBI:17754"/>
    </ligand>
</feature>
<feature type="binding site" evidence="1">
    <location>
        <position position="83"/>
    </location>
    <ligand>
        <name>sn-glycerol 3-phosphate</name>
        <dbReference type="ChEBI" id="CHEBI:57597"/>
    </ligand>
</feature>
<feature type="binding site" evidence="1">
    <location>
        <position position="84"/>
    </location>
    <ligand>
        <name>glycerol</name>
        <dbReference type="ChEBI" id="CHEBI:17754"/>
    </ligand>
</feature>
<feature type="binding site" evidence="1">
    <location>
        <position position="84"/>
    </location>
    <ligand>
        <name>sn-glycerol 3-phosphate</name>
        <dbReference type="ChEBI" id="CHEBI:57597"/>
    </ligand>
</feature>
<feature type="binding site" evidence="1">
    <location>
        <position position="135"/>
    </location>
    <ligand>
        <name>glycerol</name>
        <dbReference type="ChEBI" id="CHEBI:17754"/>
    </ligand>
</feature>
<feature type="binding site" evidence="1">
    <location>
        <position position="135"/>
    </location>
    <ligand>
        <name>sn-glycerol 3-phosphate</name>
        <dbReference type="ChEBI" id="CHEBI:57597"/>
    </ligand>
</feature>
<feature type="binding site" evidence="1">
    <location>
        <position position="255"/>
    </location>
    <ligand>
        <name>glycerol</name>
        <dbReference type="ChEBI" id="CHEBI:17754"/>
    </ligand>
</feature>
<feature type="binding site" evidence="1">
    <location>
        <position position="255"/>
    </location>
    <ligand>
        <name>sn-glycerol 3-phosphate</name>
        <dbReference type="ChEBI" id="CHEBI:57597"/>
    </ligand>
</feature>
<feature type="binding site" evidence="1">
    <location>
        <position position="256"/>
    </location>
    <ligand>
        <name>glycerol</name>
        <dbReference type="ChEBI" id="CHEBI:17754"/>
    </ligand>
</feature>
<feature type="binding site" evidence="1">
    <location>
        <position position="277"/>
    </location>
    <ligand>
        <name>ADP</name>
        <dbReference type="ChEBI" id="CHEBI:456216"/>
    </ligand>
</feature>
<feature type="binding site" evidence="1">
    <location>
        <position position="277"/>
    </location>
    <ligand>
        <name>ATP</name>
        <dbReference type="ChEBI" id="CHEBI:30616"/>
    </ligand>
</feature>
<feature type="binding site" evidence="1">
    <location>
        <position position="321"/>
    </location>
    <ligand>
        <name>ADP</name>
        <dbReference type="ChEBI" id="CHEBI:456216"/>
    </ligand>
</feature>
<feature type="binding site" evidence="1">
    <location>
        <position position="321"/>
    </location>
    <ligand>
        <name>ATP</name>
        <dbReference type="ChEBI" id="CHEBI:30616"/>
    </ligand>
</feature>
<feature type="binding site" evidence="1">
    <location>
        <position position="421"/>
    </location>
    <ligand>
        <name>ADP</name>
        <dbReference type="ChEBI" id="CHEBI:456216"/>
    </ligand>
</feature>
<feature type="binding site" evidence="1">
    <location>
        <position position="421"/>
    </location>
    <ligand>
        <name>ATP</name>
        <dbReference type="ChEBI" id="CHEBI:30616"/>
    </ligand>
</feature>
<feature type="binding site" evidence="1">
    <location>
        <position position="425"/>
    </location>
    <ligand>
        <name>ADP</name>
        <dbReference type="ChEBI" id="CHEBI:456216"/>
    </ligand>
</feature>
<protein>
    <recommendedName>
        <fullName evidence="1">Glycerol kinase</fullName>
        <ecNumber evidence="1">2.7.1.30</ecNumber>
    </recommendedName>
    <alternativeName>
        <fullName evidence="1">ATP:glycerol 3-phosphotransferase</fullName>
    </alternativeName>
    <alternativeName>
        <fullName evidence="1">Glycerokinase</fullName>
        <shortName evidence="1">GK</shortName>
    </alternativeName>
</protein>
<accession>Q18JE8</accession>